<protein>
    <recommendedName>
        <fullName evidence="1">Lipid-A-disaccharide synthase</fullName>
        <ecNumber evidence="1">2.4.1.182</ecNumber>
    </recommendedName>
</protein>
<organism>
    <name type="scientific">Bordetella parapertussis (strain 12822 / ATCC BAA-587 / NCTC 13253)</name>
    <dbReference type="NCBI Taxonomy" id="257311"/>
    <lineage>
        <taxon>Bacteria</taxon>
        <taxon>Pseudomonadati</taxon>
        <taxon>Pseudomonadota</taxon>
        <taxon>Betaproteobacteria</taxon>
        <taxon>Burkholderiales</taxon>
        <taxon>Alcaligenaceae</taxon>
        <taxon>Bordetella</taxon>
    </lineage>
</organism>
<keyword id="KW-0328">Glycosyltransferase</keyword>
<keyword id="KW-0441">Lipid A biosynthesis</keyword>
<keyword id="KW-0444">Lipid biosynthesis</keyword>
<keyword id="KW-0443">Lipid metabolism</keyword>
<keyword id="KW-0808">Transferase</keyword>
<feature type="chain" id="PRO_0000190153" description="Lipid-A-disaccharide synthase">
    <location>
        <begin position="1"/>
        <end position="393"/>
    </location>
</feature>
<sequence length="393" mass="42748">MSLRIGMVAGEPSGDLLAGRIIAGLQARAPGVHCAGIGGPQMAARGFEAWHPMHALTVFGYIDAFKRIPSLLSTYGDVKRRLLAEPPSVFVGIDAPDFNLRLEHQLRQAGTPTVHFVGPSIWAWRYERINKIRAAVSHMLVLFPFEEALYRKEGIPVTYVGHPLAGVIPMQPDRAAARARLGIDADARVLAILPGSRSSEIRLLAPRFLQAAAELVRRDPRLQCVVPMVNPQRRAEFEAIAAQHPVPGLRCVTAAEGQGETPVAWSVMEASNAVLVASGTATLETALYKRPMVISYVLSPWMRRIMAWKSGQQRPYLPWVGLPNVLLRDFAVPELLQDEATPAALAEATWQALTDEAGAARIEARFTALHQDLLRDTPALAAQAILEVADGAA</sequence>
<gene>
    <name evidence="1" type="primary">lpxB</name>
    <name type="synonym">pgsB</name>
    <name type="ordered locus">BPP1540</name>
</gene>
<proteinExistence type="inferred from homology"/>
<reference key="1">
    <citation type="journal article" date="2003" name="Nat. Genet.">
        <title>Comparative analysis of the genome sequences of Bordetella pertussis, Bordetella parapertussis and Bordetella bronchiseptica.</title>
        <authorList>
            <person name="Parkhill J."/>
            <person name="Sebaihia M."/>
            <person name="Preston A."/>
            <person name="Murphy L.D."/>
            <person name="Thomson N.R."/>
            <person name="Harris D.E."/>
            <person name="Holden M.T.G."/>
            <person name="Churcher C.M."/>
            <person name="Bentley S.D."/>
            <person name="Mungall K.L."/>
            <person name="Cerdeno-Tarraga A.-M."/>
            <person name="Temple L."/>
            <person name="James K.D."/>
            <person name="Harris B."/>
            <person name="Quail M.A."/>
            <person name="Achtman M."/>
            <person name="Atkin R."/>
            <person name="Baker S."/>
            <person name="Basham D."/>
            <person name="Bason N."/>
            <person name="Cherevach I."/>
            <person name="Chillingworth T."/>
            <person name="Collins M."/>
            <person name="Cronin A."/>
            <person name="Davis P."/>
            <person name="Doggett J."/>
            <person name="Feltwell T."/>
            <person name="Goble A."/>
            <person name="Hamlin N."/>
            <person name="Hauser H."/>
            <person name="Holroyd S."/>
            <person name="Jagels K."/>
            <person name="Leather S."/>
            <person name="Moule S."/>
            <person name="Norberczak H."/>
            <person name="O'Neil S."/>
            <person name="Ormond D."/>
            <person name="Price C."/>
            <person name="Rabbinowitsch E."/>
            <person name="Rutter S."/>
            <person name="Sanders M."/>
            <person name="Saunders D."/>
            <person name="Seeger K."/>
            <person name="Sharp S."/>
            <person name="Simmonds M."/>
            <person name="Skelton J."/>
            <person name="Squares R."/>
            <person name="Squares S."/>
            <person name="Stevens K."/>
            <person name="Unwin L."/>
            <person name="Whitehead S."/>
            <person name="Barrell B.G."/>
            <person name="Maskell D.J."/>
        </authorList>
    </citation>
    <scope>NUCLEOTIDE SEQUENCE [LARGE SCALE GENOMIC DNA]</scope>
    <source>
        <strain>12822 / ATCC BAA-587 / NCTC 13253</strain>
    </source>
</reference>
<accession>Q7WA47</accession>
<evidence type="ECO:0000255" key="1">
    <source>
        <dbReference type="HAMAP-Rule" id="MF_00392"/>
    </source>
</evidence>
<dbReference type="EC" id="2.4.1.182" evidence="1"/>
<dbReference type="EMBL" id="BX640427">
    <property type="protein sequence ID" value="CAE36842.1"/>
    <property type="molecule type" value="Genomic_DNA"/>
</dbReference>
<dbReference type="RefSeq" id="WP_003811772.1">
    <property type="nucleotide sequence ID" value="NC_002928.3"/>
</dbReference>
<dbReference type="SMR" id="Q7WA47"/>
<dbReference type="CAZy" id="GT19">
    <property type="family name" value="Glycosyltransferase Family 19"/>
</dbReference>
<dbReference type="GeneID" id="93203299"/>
<dbReference type="KEGG" id="bpa:BPP1540"/>
<dbReference type="HOGENOM" id="CLU_036577_3_0_4"/>
<dbReference type="UniPathway" id="UPA00973"/>
<dbReference type="Proteomes" id="UP000001421">
    <property type="component" value="Chromosome"/>
</dbReference>
<dbReference type="GO" id="GO:0016020">
    <property type="term" value="C:membrane"/>
    <property type="evidence" value="ECO:0007669"/>
    <property type="project" value="GOC"/>
</dbReference>
<dbReference type="GO" id="GO:0008915">
    <property type="term" value="F:lipid-A-disaccharide synthase activity"/>
    <property type="evidence" value="ECO:0007669"/>
    <property type="project" value="UniProtKB-UniRule"/>
</dbReference>
<dbReference type="GO" id="GO:0005543">
    <property type="term" value="F:phospholipid binding"/>
    <property type="evidence" value="ECO:0007669"/>
    <property type="project" value="TreeGrafter"/>
</dbReference>
<dbReference type="GO" id="GO:0009245">
    <property type="term" value="P:lipid A biosynthetic process"/>
    <property type="evidence" value="ECO:0007669"/>
    <property type="project" value="UniProtKB-UniRule"/>
</dbReference>
<dbReference type="CDD" id="cd01635">
    <property type="entry name" value="Glycosyltransferase_GTB-type"/>
    <property type="match status" value="1"/>
</dbReference>
<dbReference type="HAMAP" id="MF_00392">
    <property type="entry name" value="LpxB"/>
    <property type="match status" value="1"/>
</dbReference>
<dbReference type="InterPro" id="IPR003835">
    <property type="entry name" value="Glyco_trans_19"/>
</dbReference>
<dbReference type="NCBIfam" id="TIGR00215">
    <property type="entry name" value="lpxB"/>
    <property type="match status" value="1"/>
</dbReference>
<dbReference type="PANTHER" id="PTHR30372">
    <property type="entry name" value="LIPID-A-DISACCHARIDE SYNTHASE"/>
    <property type="match status" value="1"/>
</dbReference>
<dbReference type="PANTHER" id="PTHR30372:SF4">
    <property type="entry name" value="LIPID-A-DISACCHARIDE SYNTHASE, MITOCHONDRIAL-RELATED"/>
    <property type="match status" value="1"/>
</dbReference>
<dbReference type="Pfam" id="PF02684">
    <property type="entry name" value="LpxB"/>
    <property type="match status" value="1"/>
</dbReference>
<dbReference type="SUPFAM" id="SSF53756">
    <property type="entry name" value="UDP-Glycosyltransferase/glycogen phosphorylase"/>
    <property type="match status" value="1"/>
</dbReference>
<name>LPXB_BORPA</name>
<comment type="function">
    <text evidence="1">Condensation of UDP-2,3-diacylglucosamine and 2,3-diacylglucosamine-1-phosphate to form lipid A disaccharide, a precursor of lipid A, a phosphorylated glycolipid that anchors the lipopolysaccharide to the outer membrane of the cell.</text>
</comment>
<comment type="catalytic activity">
    <reaction evidence="1">
        <text>a lipid X + a UDP-2-N,3-O-bis[(3R)-3-hydroxyacyl]-alpha-D-glucosamine = a lipid A disaccharide + UDP + H(+)</text>
        <dbReference type="Rhea" id="RHEA:67828"/>
        <dbReference type="ChEBI" id="CHEBI:15378"/>
        <dbReference type="ChEBI" id="CHEBI:58223"/>
        <dbReference type="ChEBI" id="CHEBI:137748"/>
        <dbReference type="ChEBI" id="CHEBI:176338"/>
        <dbReference type="ChEBI" id="CHEBI:176343"/>
        <dbReference type="EC" id="2.4.1.182"/>
    </reaction>
</comment>
<comment type="pathway">
    <text evidence="1">Bacterial outer membrane biogenesis; LPS lipid A biosynthesis.</text>
</comment>
<comment type="similarity">
    <text evidence="1">Belongs to the LpxB family.</text>
</comment>